<proteinExistence type="inferred from homology"/>
<organism>
    <name type="scientific">Chlorobium chlorochromatii (strain CaD3)</name>
    <dbReference type="NCBI Taxonomy" id="340177"/>
    <lineage>
        <taxon>Bacteria</taxon>
        <taxon>Pseudomonadati</taxon>
        <taxon>Chlorobiota</taxon>
        <taxon>Chlorobiia</taxon>
        <taxon>Chlorobiales</taxon>
        <taxon>Chlorobiaceae</taxon>
        <taxon>Chlorobium/Pelodictyon group</taxon>
        <taxon>Chlorobium</taxon>
    </lineage>
</organism>
<gene>
    <name type="ordered locus">Cag_1513</name>
</gene>
<dbReference type="EMBL" id="CP000108">
    <property type="protein sequence ID" value="ABB28768.1"/>
    <property type="molecule type" value="Genomic_DNA"/>
</dbReference>
<dbReference type="SMR" id="Q3AQF7"/>
<dbReference type="STRING" id="340177.Cag_1513"/>
<dbReference type="KEGG" id="cch:Cag_1513"/>
<dbReference type="eggNOG" id="COG2003">
    <property type="taxonomic scope" value="Bacteria"/>
</dbReference>
<dbReference type="HOGENOM" id="CLU_073529_0_2_10"/>
<dbReference type="OrthoDB" id="9804482at2"/>
<dbReference type="GO" id="GO:0046872">
    <property type="term" value="F:metal ion binding"/>
    <property type="evidence" value="ECO:0007669"/>
    <property type="project" value="UniProtKB-KW"/>
</dbReference>
<dbReference type="GO" id="GO:0008237">
    <property type="term" value="F:metallopeptidase activity"/>
    <property type="evidence" value="ECO:0007669"/>
    <property type="project" value="UniProtKB-KW"/>
</dbReference>
<dbReference type="GO" id="GO:0006508">
    <property type="term" value="P:proteolysis"/>
    <property type="evidence" value="ECO:0007669"/>
    <property type="project" value="UniProtKB-KW"/>
</dbReference>
<dbReference type="CDD" id="cd08071">
    <property type="entry name" value="MPN_DUF2466"/>
    <property type="match status" value="1"/>
</dbReference>
<dbReference type="Gene3D" id="1.10.150.20">
    <property type="entry name" value="5' to 3' exonuclease, C-terminal subdomain"/>
    <property type="match status" value="1"/>
</dbReference>
<dbReference type="Gene3D" id="3.40.140.10">
    <property type="entry name" value="Cytidine Deaminase, domain 2"/>
    <property type="match status" value="1"/>
</dbReference>
<dbReference type="InterPro" id="IPR037518">
    <property type="entry name" value="MPN"/>
</dbReference>
<dbReference type="InterPro" id="IPR025657">
    <property type="entry name" value="RadC_JAB"/>
</dbReference>
<dbReference type="InterPro" id="IPR010994">
    <property type="entry name" value="RuvA_2-like"/>
</dbReference>
<dbReference type="InterPro" id="IPR001405">
    <property type="entry name" value="UPF0758"/>
</dbReference>
<dbReference type="InterPro" id="IPR020891">
    <property type="entry name" value="UPF0758_CS"/>
</dbReference>
<dbReference type="InterPro" id="IPR046778">
    <property type="entry name" value="UPF0758_N"/>
</dbReference>
<dbReference type="NCBIfam" id="NF000642">
    <property type="entry name" value="PRK00024.1"/>
    <property type="match status" value="1"/>
</dbReference>
<dbReference type="NCBIfam" id="TIGR00608">
    <property type="entry name" value="radc"/>
    <property type="match status" value="1"/>
</dbReference>
<dbReference type="PANTHER" id="PTHR30471">
    <property type="entry name" value="DNA REPAIR PROTEIN RADC"/>
    <property type="match status" value="1"/>
</dbReference>
<dbReference type="PANTHER" id="PTHR30471:SF3">
    <property type="entry name" value="UPF0758 PROTEIN YEES-RELATED"/>
    <property type="match status" value="1"/>
</dbReference>
<dbReference type="Pfam" id="PF04002">
    <property type="entry name" value="RadC"/>
    <property type="match status" value="1"/>
</dbReference>
<dbReference type="Pfam" id="PF20582">
    <property type="entry name" value="UPF0758_N"/>
    <property type="match status" value="1"/>
</dbReference>
<dbReference type="SUPFAM" id="SSF47781">
    <property type="entry name" value="RuvA domain 2-like"/>
    <property type="match status" value="1"/>
</dbReference>
<dbReference type="PROSITE" id="PS50249">
    <property type="entry name" value="MPN"/>
    <property type="match status" value="1"/>
</dbReference>
<dbReference type="PROSITE" id="PS01302">
    <property type="entry name" value="UPF0758"/>
    <property type="match status" value="1"/>
</dbReference>
<comment type="similarity">
    <text evidence="2">Belongs to the UPF0758 family.</text>
</comment>
<feature type="chain" id="PRO_1000089800" description="UPF0758 protein Cag_1513">
    <location>
        <begin position="1"/>
        <end position="222"/>
    </location>
</feature>
<feature type="domain" description="MPN" evidence="1">
    <location>
        <begin position="100"/>
        <end position="222"/>
    </location>
</feature>
<feature type="short sequence motif" description="JAMM motif" evidence="1">
    <location>
        <begin position="171"/>
        <end position="184"/>
    </location>
</feature>
<feature type="binding site" evidence="1">
    <location>
        <position position="171"/>
    </location>
    <ligand>
        <name>Zn(2+)</name>
        <dbReference type="ChEBI" id="CHEBI:29105"/>
        <note>catalytic</note>
    </ligand>
</feature>
<feature type="binding site" evidence="1">
    <location>
        <position position="173"/>
    </location>
    <ligand>
        <name>Zn(2+)</name>
        <dbReference type="ChEBI" id="CHEBI:29105"/>
        <note>catalytic</note>
    </ligand>
</feature>
<feature type="binding site" evidence="1">
    <location>
        <position position="184"/>
    </location>
    <ligand>
        <name>Zn(2+)</name>
        <dbReference type="ChEBI" id="CHEBI:29105"/>
        <note>catalytic</note>
    </ligand>
</feature>
<protein>
    <recommendedName>
        <fullName>UPF0758 protein Cag_1513</fullName>
    </recommendedName>
</protein>
<reference key="1">
    <citation type="submission" date="2005-08" db="EMBL/GenBank/DDBJ databases">
        <title>Complete sequence of Chlorobium chlorochromatii CaD3.</title>
        <authorList>
            <consortium name="US DOE Joint Genome Institute"/>
            <person name="Copeland A."/>
            <person name="Lucas S."/>
            <person name="Lapidus A."/>
            <person name="Barry K."/>
            <person name="Detter J.C."/>
            <person name="Glavina T."/>
            <person name="Hammon N."/>
            <person name="Israni S."/>
            <person name="Pitluck S."/>
            <person name="Bryant D."/>
            <person name="Schmutz J."/>
            <person name="Larimer F."/>
            <person name="Land M."/>
            <person name="Kyrpides N."/>
            <person name="Ivanova N."/>
            <person name="Richardson P."/>
        </authorList>
    </citation>
    <scope>NUCLEOTIDE SEQUENCE [LARGE SCALE GENOMIC DNA]</scope>
    <source>
        <strain>CaD3</strain>
    </source>
</reference>
<accession>Q3AQF7</accession>
<sequence length="222" mass="25351">MKLHDIDPDNRPRERFLQHGAAALSPAELLALILRSGSQQYNILDTCHHIINRFSLEKLSDVSLKELQQIKGIGESKAMQIVAIFELNRRLHYSRNQLRKIMAAGDVFEYMSGRIPDESKEHLFVLHLNTKNQVIKNELISIGTLNTAVIHPREIFKSAIRESAHSIIVVHNHPSGDVNPSNADKKITNELKQAGAFMQIEMLDHVIMSKTEWYSFRERGLL</sequence>
<name>Y1513_CHLCH</name>
<keyword id="KW-0378">Hydrolase</keyword>
<keyword id="KW-0479">Metal-binding</keyword>
<keyword id="KW-0482">Metalloprotease</keyword>
<keyword id="KW-0645">Protease</keyword>
<keyword id="KW-0862">Zinc</keyword>
<evidence type="ECO:0000255" key="1">
    <source>
        <dbReference type="PROSITE-ProRule" id="PRU01182"/>
    </source>
</evidence>
<evidence type="ECO:0000305" key="2"/>